<dbReference type="EC" id="2.1.1.14" evidence="1"/>
<dbReference type="EMBL" id="CP000142">
    <property type="protein sequence ID" value="ABA87702.1"/>
    <property type="molecule type" value="Genomic_DNA"/>
</dbReference>
<dbReference type="RefSeq" id="WP_011340124.1">
    <property type="nucleotide sequence ID" value="NC_007498.2"/>
</dbReference>
<dbReference type="SMR" id="Q3A7E2"/>
<dbReference type="STRING" id="338963.Pcar_0442"/>
<dbReference type="KEGG" id="pca:Pcar_0442"/>
<dbReference type="eggNOG" id="COG0620">
    <property type="taxonomic scope" value="Bacteria"/>
</dbReference>
<dbReference type="HOGENOM" id="CLU_013175_0_0_7"/>
<dbReference type="OrthoDB" id="244285at2"/>
<dbReference type="UniPathway" id="UPA00051">
    <property type="reaction ID" value="UER00082"/>
</dbReference>
<dbReference type="Proteomes" id="UP000002534">
    <property type="component" value="Chromosome"/>
</dbReference>
<dbReference type="GO" id="GO:0003871">
    <property type="term" value="F:5-methyltetrahydropteroyltriglutamate-homocysteine S-methyltransferase activity"/>
    <property type="evidence" value="ECO:0007669"/>
    <property type="project" value="UniProtKB-UniRule"/>
</dbReference>
<dbReference type="GO" id="GO:0008270">
    <property type="term" value="F:zinc ion binding"/>
    <property type="evidence" value="ECO:0007669"/>
    <property type="project" value="InterPro"/>
</dbReference>
<dbReference type="GO" id="GO:0009086">
    <property type="term" value="P:methionine biosynthetic process"/>
    <property type="evidence" value="ECO:0007669"/>
    <property type="project" value="UniProtKB-UniRule"/>
</dbReference>
<dbReference type="GO" id="GO:0032259">
    <property type="term" value="P:methylation"/>
    <property type="evidence" value="ECO:0007669"/>
    <property type="project" value="UniProtKB-KW"/>
</dbReference>
<dbReference type="CDD" id="cd03311">
    <property type="entry name" value="CIMS_C_terminal_like"/>
    <property type="match status" value="1"/>
</dbReference>
<dbReference type="CDD" id="cd03312">
    <property type="entry name" value="CIMS_N_terminal_like"/>
    <property type="match status" value="1"/>
</dbReference>
<dbReference type="Gene3D" id="3.20.20.210">
    <property type="match status" value="2"/>
</dbReference>
<dbReference type="HAMAP" id="MF_00172">
    <property type="entry name" value="Meth_synth"/>
    <property type="match status" value="1"/>
</dbReference>
<dbReference type="InterPro" id="IPR013215">
    <property type="entry name" value="Cbl-indep_Met_Synth_N"/>
</dbReference>
<dbReference type="InterPro" id="IPR006276">
    <property type="entry name" value="Cobalamin-indep_Met_synthase"/>
</dbReference>
<dbReference type="InterPro" id="IPR002629">
    <property type="entry name" value="Met_Synth_C/arc"/>
</dbReference>
<dbReference type="InterPro" id="IPR038071">
    <property type="entry name" value="UROD/MetE-like_sf"/>
</dbReference>
<dbReference type="NCBIfam" id="TIGR01371">
    <property type="entry name" value="met_syn_B12ind"/>
    <property type="match status" value="1"/>
</dbReference>
<dbReference type="NCBIfam" id="NF003556">
    <property type="entry name" value="PRK05222.1"/>
    <property type="match status" value="1"/>
</dbReference>
<dbReference type="PANTHER" id="PTHR30519">
    <property type="entry name" value="5-METHYLTETRAHYDROPTEROYLTRIGLUTAMATE--HOMOCYSTEINE METHYLTRANSFERASE"/>
    <property type="match status" value="1"/>
</dbReference>
<dbReference type="Pfam" id="PF08267">
    <property type="entry name" value="Meth_synt_1"/>
    <property type="match status" value="1"/>
</dbReference>
<dbReference type="Pfam" id="PF01717">
    <property type="entry name" value="Meth_synt_2"/>
    <property type="match status" value="1"/>
</dbReference>
<dbReference type="PIRSF" id="PIRSF000382">
    <property type="entry name" value="MeTrfase_B12_ind"/>
    <property type="match status" value="1"/>
</dbReference>
<dbReference type="SUPFAM" id="SSF51726">
    <property type="entry name" value="UROD/MetE-like"/>
    <property type="match status" value="2"/>
</dbReference>
<name>METE_SYNC1</name>
<reference key="1">
    <citation type="submission" date="2005-10" db="EMBL/GenBank/DDBJ databases">
        <title>Complete sequence of Pelobacter carbinolicus DSM 2380.</title>
        <authorList>
            <person name="Copeland A."/>
            <person name="Lucas S."/>
            <person name="Lapidus A."/>
            <person name="Barry K."/>
            <person name="Detter J.C."/>
            <person name="Glavina T."/>
            <person name="Hammon N."/>
            <person name="Israni S."/>
            <person name="Pitluck S."/>
            <person name="Chertkov O."/>
            <person name="Schmutz J."/>
            <person name="Larimer F."/>
            <person name="Land M."/>
            <person name="Kyrpides N."/>
            <person name="Ivanova N."/>
            <person name="Richardson P."/>
        </authorList>
    </citation>
    <scope>NUCLEOTIDE SEQUENCE [LARGE SCALE GENOMIC DNA]</scope>
    <source>
        <strain>DSM 2380 / NBRC 103641 / GraBd1</strain>
    </source>
</reference>
<accession>Q3A7E2</accession>
<comment type="function">
    <text evidence="1">Catalyzes the transfer of a methyl group from 5-methyltetrahydrofolate to homocysteine resulting in methionine formation.</text>
</comment>
<comment type="catalytic activity">
    <reaction evidence="1">
        <text>5-methyltetrahydropteroyltri-L-glutamate + L-homocysteine = tetrahydropteroyltri-L-glutamate + L-methionine</text>
        <dbReference type="Rhea" id="RHEA:21196"/>
        <dbReference type="ChEBI" id="CHEBI:57844"/>
        <dbReference type="ChEBI" id="CHEBI:58140"/>
        <dbReference type="ChEBI" id="CHEBI:58199"/>
        <dbReference type="ChEBI" id="CHEBI:58207"/>
        <dbReference type="EC" id="2.1.1.14"/>
    </reaction>
</comment>
<comment type="cofactor">
    <cofactor evidence="1">
        <name>Zn(2+)</name>
        <dbReference type="ChEBI" id="CHEBI:29105"/>
    </cofactor>
    <text evidence="1">Binds 1 zinc ion per subunit.</text>
</comment>
<comment type="pathway">
    <text evidence="1">Amino-acid biosynthesis; L-methionine biosynthesis via de novo pathway; L-methionine from L-homocysteine (MetE route): step 1/1.</text>
</comment>
<comment type="similarity">
    <text evidence="1">Belongs to the vitamin-B12 independent methionine synthase family.</text>
</comment>
<evidence type="ECO:0000255" key="1">
    <source>
        <dbReference type="HAMAP-Rule" id="MF_00172"/>
    </source>
</evidence>
<protein>
    <recommendedName>
        <fullName evidence="1">5-methyltetrahydropteroyltriglutamate--homocysteine methyltransferase</fullName>
        <ecNumber evidence="1">2.1.1.14</ecNumber>
    </recommendedName>
    <alternativeName>
        <fullName evidence="1">Cobalamin-independent methionine synthase</fullName>
    </alternativeName>
    <alternativeName>
        <fullName evidence="1">Methionine synthase, vitamin-B12 independent isozyme</fullName>
    </alternativeName>
</protein>
<gene>
    <name evidence="1" type="primary">metE</name>
    <name type="ordered locus">Pcar_0442</name>
</gene>
<organism>
    <name type="scientific">Syntrophotalea carbinolica (strain DSM 2380 / NBRC 103641 / GraBd1)</name>
    <name type="common">Pelobacter carbinolicus</name>
    <dbReference type="NCBI Taxonomy" id="338963"/>
    <lineage>
        <taxon>Bacteria</taxon>
        <taxon>Pseudomonadati</taxon>
        <taxon>Thermodesulfobacteriota</taxon>
        <taxon>Desulfuromonadia</taxon>
        <taxon>Desulfuromonadales</taxon>
        <taxon>Syntrophotaleaceae</taxon>
        <taxon>Syntrophotalea</taxon>
    </lineage>
</organism>
<proteinExistence type="inferred from homology"/>
<sequence length="758" mass="85720">MLTHTLGFPRMGAHRELKKNLESYWKGAIGQEKLMASGRELRLRHWRLQQQAGIDLVPVGDFSYYDHMLDMVAMLGAVPPRFGWQGESVDLDTYFYMARGSSGHRTTTAMEMTKWFDTNYHYIVPEFYPGQRFRLARNRLFEELAEACIEGIQAKPVLPGPMTFIALGKEMVAGFDRWSHLDAVVEVYEEIVSRVAAKCSWIQLDEPILATDVPGPIRLRVRDVYRRLAAVAGPCRLMVATYFGALQENLDLALSLPVDGLHVDLVRAPGQLEKVLPCLPENMVLSLGLIDGRNVWRSNLRQAISTAQDAVVARGSDRVMIAPSCSLLHVPVDLAGEAVLDPRIRSWLAFARQKCQEVNVVRLALDGEDVTEVLQANDTAMENRRKSALVHRDAVRRRMADISPDMYCRRSSFEERKKQQAWLRLPTLPTTTIGSFPQVAGVRSARRSFKQGRISEEQYRAEMQRYIREAIAQQEALGLDVLVHGEPERNDMVEYFGEQLAGFCFTENGWVQGYGSRCVKPPIIYGDVERLKPMTMEWTTYAQQQTNRPLKGMLTGPVTMLCWSFVRDDQPRSATCKQIALAIRDEVQDLEQAGIKIIQVDEAALREGLPLRKSAWREYLGWAVDAFRLTASGVADSTQIHTHMCYSEFNHIAEWIAKMDADVISIEASRSNMELLGVLESFTYPNDIGPGVYDIHSPRVPSVAEMVELLRKASEVIPLERLWVNPDCGLKTRAWPETLASLRNMVAAAQKLRFFARG</sequence>
<feature type="chain" id="PRO_1000071614" description="5-methyltetrahydropteroyltriglutamate--homocysteine methyltransferase">
    <location>
        <begin position="1"/>
        <end position="758"/>
    </location>
</feature>
<feature type="active site" description="Proton donor" evidence="1">
    <location>
        <position position="696"/>
    </location>
</feature>
<feature type="binding site" evidence="1">
    <location>
        <begin position="15"/>
        <end position="18"/>
    </location>
    <ligand>
        <name>5-methyltetrahydropteroyltri-L-glutamate</name>
        <dbReference type="ChEBI" id="CHEBI:58207"/>
    </ligand>
</feature>
<feature type="binding site" evidence="1">
    <location>
        <position position="114"/>
    </location>
    <ligand>
        <name>5-methyltetrahydropteroyltri-L-glutamate</name>
        <dbReference type="ChEBI" id="CHEBI:58207"/>
    </ligand>
</feature>
<feature type="binding site" evidence="1">
    <location>
        <begin position="433"/>
        <end position="435"/>
    </location>
    <ligand>
        <name>L-homocysteine</name>
        <dbReference type="ChEBI" id="CHEBI:58199"/>
    </ligand>
</feature>
<feature type="binding site" evidence="1">
    <location>
        <begin position="433"/>
        <end position="435"/>
    </location>
    <ligand>
        <name>L-methionine</name>
        <dbReference type="ChEBI" id="CHEBI:57844"/>
    </ligand>
</feature>
<feature type="binding site" evidence="1">
    <location>
        <position position="486"/>
    </location>
    <ligand>
        <name>L-homocysteine</name>
        <dbReference type="ChEBI" id="CHEBI:58199"/>
    </ligand>
</feature>
<feature type="binding site" evidence="1">
    <location>
        <position position="486"/>
    </location>
    <ligand>
        <name>L-methionine</name>
        <dbReference type="ChEBI" id="CHEBI:57844"/>
    </ligand>
</feature>
<feature type="binding site" evidence="1">
    <location>
        <begin position="517"/>
        <end position="518"/>
    </location>
    <ligand>
        <name>5-methyltetrahydropteroyltri-L-glutamate</name>
        <dbReference type="ChEBI" id="CHEBI:58207"/>
    </ligand>
</feature>
<feature type="binding site" evidence="1">
    <location>
        <position position="563"/>
    </location>
    <ligand>
        <name>5-methyltetrahydropteroyltri-L-glutamate</name>
        <dbReference type="ChEBI" id="CHEBI:58207"/>
    </ligand>
</feature>
<feature type="binding site" evidence="1">
    <location>
        <position position="601"/>
    </location>
    <ligand>
        <name>L-homocysteine</name>
        <dbReference type="ChEBI" id="CHEBI:58199"/>
    </ligand>
</feature>
<feature type="binding site" evidence="1">
    <location>
        <position position="601"/>
    </location>
    <ligand>
        <name>L-methionine</name>
        <dbReference type="ChEBI" id="CHEBI:57844"/>
    </ligand>
</feature>
<feature type="binding site" evidence="1">
    <location>
        <position position="607"/>
    </location>
    <ligand>
        <name>5-methyltetrahydropteroyltri-L-glutamate</name>
        <dbReference type="ChEBI" id="CHEBI:58207"/>
    </ligand>
</feature>
<feature type="binding site" evidence="1">
    <location>
        <position position="643"/>
    </location>
    <ligand>
        <name>Zn(2+)</name>
        <dbReference type="ChEBI" id="CHEBI:29105"/>
        <note>catalytic</note>
    </ligand>
</feature>
<feature type="binding site" evidence="1">
    <location>
        <position position="645"/>
    </location>
    <ligand>
        <name>Zn(2+)</name>
        <dbReference type="ChEBI" id="CHEBI:29105"/>
        <note>catalytic</note>
    </ligand>
</feature>
<feature type="binding site" evidence="1">
    <location>
        <position position="667"/>
    </location>
    <ligand>
        <name>Zn(2+)</name>
        <dbReference type="ChEBI" id="CHEBI:29105"/>
        <note>catalytic</note>
    </ligand>
</feature>
<feature type="binding site" evidence="1">
    <location>
        <position position="728"/>
    </location>
    <ligand>
        <name>Zn(2+)</name>
        <dbReference type="ChEBI" id="CHEBI:29105"/>
        <note>catalytic</note>
    </ligand>
</feature>
<keyword id="KW-0028">Amino-acid biosynthesis</keyword>
<keyword id="KW-0479">Metal-binding</keyword>
<keyword id="KW-0486">Methionine biosynthesis</keyword>
<keyword id="KW-0489">Methyltransferase</keyword>
<keyword id="KW-1185">Reference proteome</keyword>
<keyword id="KW-0677">Repeat</keyword>
<keyword id="KW-0808">Transferase</keyword>
<keyword id="KW-0862">Zinc</keyword>